<organism>
    <name type="scientific">Eremothecium gossypii (strain ATCC 10895 / CBS 109.51 / FGSC 9923 / NRRL Y-1056)</name>
    <name type="common">Yeast</name>
    <name type="synonym">Ashbya gossypii</name>
    <dbReference type="NCBI Taxonomy" id="284811"/>
    <lineage>
        <taxon>Eukaryota</taxon>
        <taxon>Fungi</taxon>
        <taxon>Dikarya</taxon>
        <taxon>Ascomycota</taxon>
        <taxon>Saccharomycotina</taxon>
        <taxon>Saccharomycetes</taxon>
        <taxon>Saccharomycetales</taxon>
        <taxon>Saccharomycetaceae</taxon>
        <taxon>Eremothecium</taxon>
    </lineage>
</organism>
<sequence length="945" mass="107269">MGVPSFFRWLSRKYPKIISPVIEDTPQVVDGVKLPIDYSAANPNGELDNLYLDMNGIVHPCSHPENKPAPETEDEMLLAVFEYTNRVLNMARPRKVLMIAVDGVAPRAKMNQQRSRRFRSARDAKLANEEKARVLAEREAYGEMIDDAVKAKKSWDTNAITPGTPFMDKLAAALRYWTSFKLATDPGWKNLQVIISDATVPGEGEHKIMNFIRSQRADVQYNPNTTHCIYGLDADLIFLGLATHEPHFKILREDVFAQDNRRRPRQHDMMDMSAEEKQALIEQDAEKPFLWLHVSVLREYLSAELLVPRLPFHFDLERAIDDWVFMCFFCGNDFLPHLPSLDVRENSIDILVDIWKAVLPSLKTYLTCDGKLNLKGVEKVLAQLGNRESDIFKKKYEQELRKKEAQERRKMLKNNPNVTKGKVDRNFTVPLESMPVFDVNGNAAAGSLNLTNKDFANMRKEITLANEGNTKALDALKRRSDENRTQRTSDTRDFSQEELESAIEVSKGDNLSAAASLRERILAKRKAAEDPEGAPEPKNPHKAPSASETEAATPASSETASQVDIPISTGMLTPGFLDTDTGVRLFEPGYHDRYYQAKFHVPTGSIDALRKKVVRSYVEGISWVLLYYYQGCPSWTWYYPYHYAPFASDFTGISDLSVTFDLGEPFLPYEQLMSVLPAASSHNLPDVFRSLMSDPESEIYDFYPEEFPIDMNGEKMAWKALVLLPFIDETRLLAAVRQKYPLLSEAERARNVRRDEVLLISNKNTHYERFLARLYTDPAPQPVNFRHFKSGLAGTALSDAEGFRPNTKMLCPLAAGSLPDISTNLFLKTAYRMPQLPAPSKSILLNGFIPPEAQLSPADRDAIMYKYPQRWNPHTMKHNLVPVGPAAVTQYQPRIGGYRAFLFHQQLMQDRPYPPAHMHSHSSGGPPLAQGPRVTQSRYQPRRFH</sequence>
<proteinExistence type="inferred from homology"/>
<gene>
    <name type="primary">RAT1</name>
    <name type="ordered locus">AGR303W</name>
</gene>
<dbReference type="EC" id="3.1.13.-"/>
<dbReference type="EMBL" id="AE016820">
    <property type="protein sequence ID" value="AAS54793.2"/>
    <property type="molecule type" value="Genomic_DNA"/>
</dbReference>
<dbReference type="RefSeq" id="NP_986969.2">
    <property type="nucleotide sequence ID" value="NM_212031.2"/>
</dbReference>
<dbReference type="SMR" id="Q74ZA0"/>
<dbReference type="FunCoup" id="Q74ZA0">
    <property type="interactions" value="1159"/>
</dbReference>
<dbReference type="STRING" id="284811.Q74ZA0"/>
<dbReference type="EnsemblFungi" id="AAS54793">
    <property type="protein sequence ID" value="AAS54793"/>
    <property type="gene ID" value="AGOS_AGR303W"/>
</dbReference>
<dbReference type="GeneID" id="4623272"/>
<dbReference type="KEGG" id="ago:AGOS_AGR303W"/>
<dbReference type="eggNOG" id="KOG2044">
    <property type="taxonomic scope" value="Eukaryota"/>
</dbReference>
<dbReference type="HOGENOM" id="CLU_006038_1_1_1"/>
<dbReference type="InParanoid" id="Q74ZA0"/>
<dbReference type="OMA" id="ITHDMVV"/>
<dbReference type="OrthoDB" id="28245at2759"/>
<dbReference type="Proteomes" id="UP000000591">
    <property type="component" value="Chromosome VII"/>
</dbReference>
<dbReference type="GO" id="GO:0090730">
    <property type="term" value="C:Las1 complex"/>
    <property type="evidence" value="ECO:0007669"/>
    <property type="project" value="EnsemblFungi"/>
</dbReference>
<dbReference type="GO" id="GO:0005634">
    <property type="term" value="C:nucleus"/>
    <property type="evidence" value="ECO:0000318"/>
    <property type="project" value="GO_Central"/>
</dbReference>
<dbReference type="GO" id="GO:0110103">
    <property type="term" value="C:RNA polymerase II termination complex"/>
    <property type="evidence" value="ECO:0007669"/>
    <property type="project" value="EnsemblFungi"/>
</dbReference>
<dbReference type="GO" id="GO:0004534">
    <property type="term" value="F:5'-3' RNA exonuclease activity"/>
    <property type="evidence" value="ECO:0000318"/>
    <property type="project" value="GO_Central"/>
</dbReference>
<dbReference type="GO" id="GO:0003723">
    <property type="term" value="F:RNA binding"/>
    <property type="evidence" value="ECO:0000318"/>
    <property type="project" value="GO_Central"/>
</dbReference>
<dbReference type="GO" id="GO:0019843">
    <property type="term" value="F:rRNA binding"/>
    <property type="evidence" value="ECO:0007669"/>
    <property type="project" value="EnsemblFungi"/>
</dbReference>
<dbReference type="GO" id="GO:0000448">
    <property type="term" value="P:cleavage in ITS2 between 5.8S rRNA and LSU-rRNA of tricistronic rRNA transcript (SSU-rRNA, 5.8S rRNA, LSU-rRNA)"/>
    <property type="evidence" value="ECO:0007669"/>
    <property type="project" value="EnsemblFungi"/>
</dbReference>
<dbReference type="GO" id="GO:0000398">
    <property type="term" value="P:mRNA splicing, via spliceosome"/>
    <property type="evidence" value="ECO:0007669"/>
    <property type="project" value="EnsemblFungi"/>
</dbReference>
<dbReference type="GO" id="GO:0110155">
    <property type="term" value="P:NAD-cap decapping"/>
    <property type="evidence" value="ECO:0007669"/>
    <property type="project" value="EnsemblFungi"/>
</dbReference>
<dbReference type="GO" id="GO:0034244">
    <property type="term" value="P:negative regulation of transcription elongation by RNA polymerase II"/>
    <property type="evidence" value="ECO:0007669"/>
    <property type="project" value="EnsemblFungi"/>
</dbReference>
<dbReference type="GO" id="GO:0071028">
    <property type="term" value="P:nuclear mRNA surveillance"/>
    <property type="evidence" value="ECO:0007669"/>
    <property type="project" value="EnsemblFungi"/>
</dbReference>
<dbReference type="GO" id="GO:0071035">
    <property type="term" value="P:nuclear polyadenylation-dependent rRNA catabolic process"/>
    <property type="evidence" value="ECO:0007669"/>
    <property type="project" value="EnsemblFungi"/>
</dbReference>
<dbReference type="GO" id="GO:0000956">
    <property type="term" value="P:nuclear-transcribed mRNA catabolic process"/>
    <property type="evidence" value="ECO:0000318"/>
    <property type="project" value="GO_Central"/>
</dbReference>
<dbReference type="GO" id="GO:1904595">
    <property type="term" value="P:positive regulation of termination of RNA polymerase II transcription"/>
    <property type="evidence" value="ECO:0007669"/>
    <property type="project" value="EnsemblFungi"/>
</dbReference>
<dbReference type="GO" id="GO:0043144">
    <property type="term" value="P:sno(s)RNA processing"/>
    <property type="evidence" value="ECO:0007669"/>
    <property type="project" value="EnsemblFungi"/>
</dbReference>
<dbReference type="GO" id="GO:0030847">
    <property type="term" value="P:termination of RNA polymerase II transcription, exosome-dependent"/>
    <property type="evidence" value="ECO:0007669"/>
    <property type="project" value="EnsemblFungi"/>
</dbReference>
<dbReference type="GO" id="GO:0030846">
    <property type="term" value="P:termination of RNA polymerase II transcription, poly(A)-coupled"/>
    <property type="evidence" value="ECO:0007669"/>
    <property type="project" value="EnsemblFungi"/>
</dbReference>
<dbReference type="CDD" id="cd18673">
    <property type="entry name" value="PIN_XRN1-2-like"/>
    <property type="match status" value="1"/>
</dbReference>
<dbReference type="FunFam" id="1.25.40.1050:FF:000002">
    <property type="entry name" value="5'-3' exoribonuclease"/>
    <property type="match status" value="1"/>
</dbReference>
<dbReference type="FunFam" id="3.40.50.12390:FF:000003">
    <property type="entry name" value="5'-3' exoribonuclease"/>
    <property type="match status" value="1"/>
</dbReference>
<dbReference type="FunFam" id="3.40.50.12390:FF:000005">
    <property type="entry name" value="5'-3' exoribonuclease 2"/>
    <property type="match status" value="1"/>
</dbReference>
<dbReference type="Gene3D" id="1.25.40.1050">
    <property type="match status" value="1"/>
</dbReference>
<dbReference type="Gene3D" id="3.40.50.12390">
    <property type="match status" value="1"/>
</dbReference>
<dbReference type="InterPro" id="IPR027073">
    <property type="entry name" value="5_3_exoribonuclease"/>
</dbReference>
<dbReference type="InterPro" id="IPR041412">
    <property type="entry name" value="Xrn1_helical"/>
</dbReference>
<dbReference type="InterPro" id="IPR004859">
    <property type="entry name" value="Xrn1_N"/>
</dbReference>
<dbReference type="InterPro" id="IPR017151">
    <property type="entry name" value="Xrn2/3/4"/>
</dbReference>
<dbReference type="PANTHER" id="PTHR12341:SF41">
    <property type="entry name" value="5'-3' EXORIBONUCLEASE 2"/>
    <property type="match status" value="1"/>
</dbReference>
<dbReference type="PANTHER" id="PTHR12341">
    <property type="entry name" value="5'-&gt;3' EXORIBONUCLEASE"/>
    <property type="match status" value="1"/>
</dbReference>
<dbReference type="Pfam" id="PF17846">
    <property type="entry name" value="XRN_M"/>
    <property type="match status" value="2"/>
</dbReference>
<dbReference type="Pfam" id="PF03159">
    <property type="entry name" value="XRN_N"/>
    <property type="match status" value="1"/>
</dbReference>
<dbReference type="PIRSF" id="PIRSF037239">
    <property type="entry name" value="Exonuclease_Xrn2"/>
    <property type="match status" value="1"/>
</dbReference>
<protein>
    <recommendedName>
        <fullName>5'-3' exoribonuclease 2</fullName>
        <ecNumber>3.1.13.-</ecNumber>
    </recommendedName>
</protein>
<name>XRN2_EREGS</name>
<accession>Q74ZA0</accession>
<keyword id="KW-0269">Exonuclease</keyword>
<keyword id="KW-0378">Hydrolase</keyword>
<keyword id="KW-0507">mRNA processing</keyword>
<keyword id="KW-0540">Nuclease</keyword>
<keyword id="KW-0539">Nucleus</keyword>
<keyword id="KW-1185">Reference proteome</keyword>
<keyword id="KW-0698">rRNA processing</keyword>
<keyword id="KW-0804">Transcription</keyword>
<keyword id="KW-0805">Transcription regulation</keyword>
<keyword id="KW-0806">Transcription termination</keyword>
<evidence type="ECO:0000250" key="1"/>
<evidence type="ECO:0000250" key="2">
    <source>
        <dbReference type="UniProtKB" id="P40848"/>
    </source>
</evidence>
<evidence type="ECO:0000250" key="3">
    <source>
        <dbReference type="UniProtKB" id="Q02792"/>
    </source>
</evidence>
<evidence type="ECO:0000256" key="4">
    <source>
        <dbReference type="SAM" id="MobiDB-lite"/>
    </source>
</evidence>
<evidence type="ECO:0000305" key="5"/>
<comment type="function">
    <text evidence="2 3">Possesses 5'-&gt;3' exoribonuclease activity (By similarity). Required for the processing of nuclear mRNA and rRNA precursors. May promote the termination of transcription by RNA polymerase II (By similarity). Essential for vegetative cell growth and chromosome segregation (By similarity).</text>
</comment>
<comment type="subunit">
    <text evidence="2">Interacts with RAI1; the interaction is direct, stabilizes RAT1 protein structure and may stimulate its exoribonuclease activity (By similarity). The interaction also stimulates RAI1 pyrophosphohydrolase activity, probably by recruiting it to mRNA substrates (By similarity).</text>
</comment>
<comment type="subcellular location">
    <subcellularLocation>
        <location evidence="1">Nucleus</location>
    </subcellularLocation>
</comment>
<comment type="similarity">
    <text evidence="5">Belongs to the 5'-3' exonuclease family. XRN2/RAT1 subfamily.</text>
</comment>
<reference key="1">
    <citation type="journal article" date="2004" name="Science">
        <title>The Ashbya gossypii genome as a tool for mapping the ancient Saccharomyces cerevisiae genome.</title>
        <authorList>
            <person name="Dietrich F.S."/>
            <person name="Voegeli S."/>
            <person name="Brachat S."/>
            <person name="Lerch A."/>
            <person name="Gates K."/>
            <person name="Steiner S."/>
            <person name="Mohr C."/>
            <person name="Poehlmann R."/>
            <person name="Luedi P."/>
            <person name="Choi S."/>
            <person name="Wing R.A."/>
            <person name="Flavier A."/>
            <person name="Gaffney T.D."/>
            <person name="Philippsen P."/>
        </authorList>
    </citation>
    <scope>NUCLEOTIDE SEQUENCE [LARGE SCALE GENOMIC DNA]</scope>
    <source>
        <strain>ATCC 10895 / CBS 109.51 / FGSC 9923 / NRRL Y-1056</strain>
    </source>
</reference>
<reference key="2">
    <citation type="journal article" date="2013" name="G3 (Bethesda)">
        <title>Genomes of Ashbya fungi isolated from insects reveal four mating-type loci, numerous translocations, lack of transposons, and distinct gene duplications.</title>
        <authorList>
            <person name="Dietrich F.S."/>
            <person name="Voegeli S."/>
            <person name="Kuo S."/>
            <person name="Philippsen P."/>
        </authorList>
    </citation>
    <scope>GENOME REANNOTATION</scope>
    <scope>SEQUENCE REVISION TO 311; 790-816; 833 AND 875</scope>
    <source>
        <strain>ATCC 10895 / CBS 109.51 / FGSC 9923 / NRRL Y-1056</strain>
    </source>
</reference>
<feature type="initiator methionine" description="Removed" evidence="1">
    <location>
        <position position="1"/>
    </location>
</feature>
<feature type="chain" id="PRO_0000249917" description="5'-3' exoribonuclease 2">
    <location>
        <begin position="2"/>
        <end position="945"/>
    </location>
</feature>
<feature type="region of interest" description="Disordered" evidence="4">
    <location>
        <begin position="473"/>
        <end position="510"/>
    </location>
</feature>
<feature type="region of interest" description="Disordered" evidence="4">
    <location>
        <begin position="524"/>
        <end position="564"/>
    </location>
</feature>
<feature type="region of interest" description="Disordered" evidence="4">
    <location>
        <begin position="912"/>
        <end position="945"/>
    </location>
</feature>
<feature type="compositionally biased region" description="Basic and acidic residues" evidence="4">
    <location>
        <begin position="474"/>
        <end position="495"/>
    </location>
</feature>
<feature type="compositionally biased region" description="Low complexity" evidence="4">
    <location>
        <begin position="543"/>
        <end position="561"/>
    </location>
</feature>